<comment type="function">
    <text evidence="10 11 12">Secreted aspartic peptidases (SAPs) are a group of ten acidic hydrolases considered as key virulence factors (PubMed:22302440, PubMed:23139737). These enzymes supply the fungus with nutrient amino acids as well as are able to degrade the selected host's proteins involved in the immune defense (PubMed:22302440, PubMed:23139737). Moreover, acts toward human hemoglobin though limited proteolysis to generate a variety of antimicrobial hemocidins, enabling to compete with the other microorganisms of the same physiological niche using the microbicidal peptides generated from the host protein (PubMed:23927842).</text>
</comment>
<comment type="function">
    <text evidence="13">Plays a key role in defense against host by cleaving histatin-5 (Hst 5), a peptide from human saliva that carries out fungicidal activity (PubMed:27390786). The cleavage rate decreases in an order of SAP2 &gt; SAP9 &gt; SAP3 &gt; SAP7 &gt; SAP4 &gt; SAP1 &gt; SAP8 (PubMed:27390786). The hydrolysis of Hst 5 by SAP8 causes production of the DSHAKRHHGY, HHSHRGY and FHEKHHSHRGY peptides (PubMed:27390786).</text>
</comment>
<comment type="catalytic activity">
    <reaction evidence="9 13">
        <text>Preferential cleavage at the carboxyl of hydrophobic amino acids, but fails to cleave 15-Leu-|-Tyr-16, 16-Tyr-|-Leu-17 and 24-Phe-|-Phe-25 of insulin B chain. Activates trypsinogen, and degrades keratin.</text>
        <dbReference type="EC" id="3.4.23.24"/>
    </reaction>
</comment>
<comment type="biophysicochemical properties">
    <phDependence>
        <text evidence="9 13">Optimum pH is 2.5 using casein-resorufin as substrate, and 6.0-7.0, the pH of the saliva, for cleavage of Hst 5.</text>
    </phDependence>
</comment>
<comment type="subunit">
    <text evidence="2">Monomer.</text>
</comment>
<comment type="subcellular location">
    <subcellularLocation>
        <location evidence="3">Secreted</location>
    </subcellularLocation>
</comment>
<comment type="induction">
    <text evidence="10 14">Expressed in greater amounts in the mature biofilms compared to early biofilms during inflammatory disorder of the palatal mucosa among denture wearers.</text>
</comment>
<comment type="similarity">
    <text evidence="16">Belongs to the peptidase A1 family.</text>
</comment>
<sequence length="405" mass="43037">MVSIITFTKNVLVTLAFALLAQGLAIPEDIDKRAEKVVSLDFTVTRKPFNATAHGQHHQSQQQQQQQQQQPAQKRGTVQTSLINEGPSYAATITVGSNKQQQTVIVDTGSSDLWVVDSAAVCQVTYPGQSPTFCKQDGTYKPSSSTTSQNLGKAFSIRYEDGSSSQGTVYKDTVGLGGASITNQQFADVTTTSVDQGILGIGFTGDESSPTYDNVPVTLKKQGIINKNAYSLYLNSASASSGTIIFGGVDNAKYTGSLTALPITSSNELRVQLSTINIAGTTVSASTTPVLDSGTTLTYFSQTIADKLAAAVGAKWNSYYQLYTSSCNLAGNIVFNFAKGVTISVPLSEFVLQDGNSCYFGVSRDSATILGDNFLRRAYAVYDLDGNTISLAQVKYTTSSSISTL</sequence>
<evidence type="ECO:0000250" key="1"/>
<evidence type="ECO:0000250" key="2">
    <source>
        <dbReference type="UniProtKB" id="P0CS83"/>
    </source>
</evidence>
<evidence type="ECO:0000250" key="3">
    <source>
        <dbReference type="UniProtKB" id="P0CY27"/>
    </source>
</evidence>
<evidence type="ECO:0000250" key="4">
    <source>
        <dbReference type="UniProtKB" id="P0CY29"/>
    </source>
</evidence>
<evidence type="ECO:0000255" key="5"/>
<evidence type="ECO:0000255" key="6">
    <source>
        <dbReference type="PROSITE-ProRule" id="PRU01103"/>
    </source>
</evidence>
<evidence type="ECO:0000255" key="7">
    <source>
        <dbReference type="PROSITE-ProRule" id="PRU10094"/>
    </source>
</evidence>
<evidence type="ECO:0000256" key="8">
    <source>
        <dbReference type="SAM" id="MobiDB-lite"/>
    </source>
</evidence>
<evidence type="ECO:0000269" key="9">
    <source>
    </source>
</evidence>
<evidence type="ECO:0000269" key="10">
    <source>
    </source>
</evidence>
<evidence type="ECO:0000269" key="11">
    <source>
    </source>
</evidence>
<evidence type="ECO:0000269" key="12">
    <source>
    </source>
</evidence>
<evidence type="ECO:0000269" key="13">
    <source>
    </source>
</evidence>
<evidence type="ECO:0000269" key="14">
    <source>
    </source>
</evidence>
<evidence type="ECO:0000303" key="15">
    <source>
    </source>
</evidence>
<evidence type="ECO:0000305" key="16"/>
<proteinExistence type="evidence at protein level"/>
<reference key="1">
    <citation type="journal article" date="2004" name="Proc. Natl. Acad. Sci. U.S.A.">
        <title>The diploid genome sequence of Candida albicans.</title>
        <authorList>
            <person name="Jones T."/>
            <person name="Federspiel N.A."/>
            <person name="Chibana H."/>
            <person name="Dungan J."/>
            <person name="Kalman S."/>
            <person name="Magee B.B."/>
            <person name="Newport G."/>
            <person name="Thorstenson Y.R."/>
            <person name="Agabian N."/>
            <person name="Magee P.T."/>
            <person name="Davis R.W."/>
            <person name="Scherer S."/>
        </authorList>
    </citation>
    <scope>NUCLEOTIDE SEQUENCE [LARGE SCALE GENOMIC DNA]</scope>
    <source>
        <strain>SC5314 / ATCC MYA-2876</strain>
    </source>
</reference>
<reference key="2">
    <citation type="journal article" date="2007" name="Genome Biol.">
        <title>Assembly of the Candida albicans genome into sixteen supercontigs aligned on the eight chromosomes.</title>
        <authorList>
            <person name="van het Hoog M."/>
            <person name="Rast T.J."/>
            <person name="Martchenko M."/>
            <person name="Grindle S."/>
            <person name="Dignard D."/>
            <person name="Hogues H."/>
            <person name="Cuomo C."/>
            <person name="Berriman M."/>
            <person name="Scherer S."/>
            <person name="Magee B.B."/>
            <person name="Whiteway M."/>
            <person name="Chibana H."/>
            <person name="Nantel A."/>
            <person name="Magee P.T."/>
        </authorList>
    </citation>
    <scope>GENOME REANNOTATION</scope>
    <source>
        <strain>SC5314 / ATCC MYA-2876</strain>
    </source>
</reference>
<reference key="3">
    <citation type="journal article" date="2013" name="Genome Biol.">
        <title>Assembly of a phased diploid Candida albicans genome facilitates allele-specific measurements and provides a simple model for repeat and indel structure.</title>
        <authorList>
            <person name="Muzzey D."/>
            <person name="Schwartz K."/>
            <person name="Weissman J.S."/>
            <person name="Sherlock G."/>
        </authorList>
    </citation>
    <scope>NUCLEOTIDE SEQUENCE [LARGE SCALE GENOMIC DNA]</scope>
    <scope>GENOME REANNOTATION</scope>
    <source>
        <strain>SC5314 / ATCC MYA-2876</strain>
    </source>
</reference>
<reference key="4">
    <citation type="journal article" date="1998" name="Microbiology">
        <title>Differential regulation of SAP8 and SAP9, which encode two new members of the secreted aspartic proteinase family in Candida albicans.</title>
        <authorList>
            <person name="Monod M."/>
            <person name="Hube B."/>
            <person name="Hess D."/>
            <person name="Sanglard D."/>
        </authorList>
    </citation>
    <scope>INDUCTION</scope>
</reference>
<reference key="5">
    <citation type="journal article" date="2011" name="J. Biochem.">
        <title>Comprehensive characterization of secreted aspartic proteases encoded by a virulence gene family in Candida albicans.</title>
        <authorList>
            <person name="Aoki W."/>
            <person name="Kitahara N."/>
            <person name="Miura N."/>
            <person name="Morisaka H."/>
            <person name="Yamamoto Y."/>
            <person name="Kuroda K."/>
            <person name="Ueda M."/>
        </authorList>
    </citation>
    <scope>CATALYTIC ACTIVITY</scope>
    <scope>BIOPHYSICOCHEMICAL PROPERTIES</scope>
</reference>
<reference key="6">
    <citation type="journal article" date="2012" name="Mycopathologia">
        <title>In vitro Candida albicans biofilm induced proteinase activity and SAP8 expression correlates with in vivo denture stomatitis severity.</title>
        <authorList>
            <person name="Ramage G."/>
            <person name="Coco B."/>
            <person name="Sherry L."/>
            <person name="Bagg J."/>
            <person name="Lappin D.F."/>
        </authorList>
    </citation>
    <scope>FUNCTION</scope>
    <scope>INDUCTION</scope>
</reference>
<reference key="7">
    <citation type="journal article" date="2012" name="PLoS ONE">
        <title>Secreted aspartic protease cleavage of Candida albicans Msb2 activates Cek1 MAPK signaling affecting biofilm formation and oropharyngeal candidiasis.</title>
        <authorList>
            <person name="Puri S."/>
            <person name="Kumar R."/>
            <person name="Chadha S."/>
            <person name="Tati S."/>
            <person name="Conti H.R."/>
            <person name="Hube B."/>
            <person name="Cullen P.J."/>
            <person name="Edgerton M."/>
        </authorList>
    </citation>
    <scope>FUNCTION</scope>
</reference>
<reference key="8">
    <citation type="journal article" date="2013" name="Peptides">
        <title>Secreted aspartic peptidases of Candida albicans liberate bactericidal hemocidins from human hemoglobin.</title>
        <authorList>
            <person name="Bochenska O."/>
            <person name="Rapala-Kozik M."/>
            <person name="Wolak N."/>
            <person name="Bras G."/>
            <person name="Kozik A."/>
            <person name="Dubin A."/>
            <person name="Aoki W."/>
            <person name="Ueda M."/>
            <person name="Mak P."/>
        </authorList>
    </citation>
    <scope>FUNCTION</scope>
</reference>
<reference key="9">
    <citation type="journal article" date="2016" name="Acta Biochim. Pol.">
        <title>The action of ten secreted aspartic proteases of pathogenic yeast Candida albicans on major human salivary antimicrobial peptide, histatin 5.</title>
        <authorList>
            <person name="Bochenska O."/>
            <person name="Rapala-Kozik M."/>
            <person name="Wolak N."/>
            <person name="Aoki W."/>
            <person name="Ueda M."/>
            <person name="Kozik A."/>
        </authorList>
    </citation>
    <scope>FUNCTION</scope>
    <scope>CATALYTIC ACTIVITY</scope>
    <scope>BIOPHYSICOCHEMICAL PROPERTIES</scope>
</reference>
<dbReference type="EC" id="3.4.23.24" evidence="9 13"/>
<dbReference type="EMBL" id="CP017625">
    <property type="protein sequence ID" value="AOW28286.1"/>
    <property type="molecule type" value="Genomic_DNA"/>
</dbReference>
<dbReference type="RefSeq" id="XP_719941.1">
    <property type="nucleotide sequence ID" value="XM_714848.2"/>
</dbReference>
<dbReference type="SMR" id="Q5AEM6"/>
<dbReference type="STRING" id="237561.Q5AEM6"/>
<dbReference type="MEROPS" id="A01.066"/>
<dbReference type="EnsemblFungi" id="C3_02510C_A-T">
    <property type="protein sequence ID" value="C3_02510C_A-T-p1"/>
    <property type="gene ID" value="C3_02510C_A"/>
</dbReference>
<dbReference type="GeneID" id="3638371"/>
<dbReference type="KEGG" id="cal:CAALFM_C302510CA"/>
<dbReference type="CGD" id="CAL0000190503">
    <property type="gene designation" value="SAP8"/>
</dbReference>
<dbReference type="VEuPathDB" id="FungiDB:C3_02510C_A"/>
<dbReference type="eggNOG" id="KOG1339">
    <property type="taxonomic scope" value="Eukaryota"/>
</dbReference>
<dbReference type="HOGENOM" id="CLU_013253_9_1_1"/>
<dbReference type="InParanoid" id="Q5AEM6"/>
<dbReference type="OMA" id="TSGETWI"/>
<dbReference type="OrthoDB" id="771136at2759"/>
<dbReference type="BRENDA" id="3.4.23.24">
    <property type="organism ID" value="1096"/>
</dbReference>
<dbReference type="PRO" id="PR:Q5AEM6"/>
<dbReference type="Proteomes" id="UP000000559">
    <property type="component" value="Chromosome 3"/>
</dbReference>
<dbReference type="GO" id="GO:0005576">
    <property type="term" value="C:extracellular region"/>
    <property type="evidence" value="ECO:0000314"/>
    <property type="project" value="CGD"/>
</dbReference>
<dbReference type="GO" id="GO:1903561">
    <property type="term" value="C:extracellular vesicle"/>
    <property type="evidence" value="ECO:0000314"/>
    <property type="project" value="CGD"/>
</dbReference>
<dbReference type="GO" id="GO:0009277">
    <property type="term" value="C:fungal-type cell wall"/>
    <property type="evidence" value="ECO:0000318"/>
    <property type="project" value="GO_Central"/>
</dbReference>
<dbReference type="GO" id="GO:0004190">
    <property type="term" value="F:aspartic-type endopeptidase activity"/>
    <property type="evidence" value="ECO:0000314"/>
    <property type="project" value="CGD"/>
</dbReference>
<dbReference type="GO" id="GO:0031505">
    <property type="term" value="P:fungal-type cell wall organization"/>
    <property type="evidence" value="ECO:0000318"/>
    <property type="project" value="GO_Central"/>
</dbReference>
<dbReference type="GO" id="GO:0006508">
    <property type="term" value="P:proteolysis"/>
    <property type="evidence" value="ECO:0000314"/>
    <property type="project" value="CGD"/>
</dbReference>
<dbReference type="CDD" id="cd05474">
    <property type="entry name" value="SAP_like"/>
    <property type="match status" value="1"/>
</dbReference>
<dbReference type="FunFam" id="2.40.70.10:FF:000011">
    <property type="entry name" value="Aspartic protease"/>
    <property type="match status" value="1"/>
</dbReference>
<dbReference type="FunFam" id="2.40.70.10:FF:000023">
    <property type="entry name" value="Aspartic protease"/>
    <property type="match status" value="1"/>
</dbReference>
<dbReference type="Gene3D" id="2.40.70.10">
    <property type="entry name" value="Acid Proteases"/>
    <property type="match status" value="2"/>
</dbReference>
<dbReference type="InterPro" id="IPR001461">
    <property type="entry name" value="Aspartic_peptidase_A1"/>
</dbReference>
<dbReference type="InterPro" id="IPR001969">
    <property type="entry name" value="Aspartic_peptidase_AS"/>
</dbReference>
<dbReference type="InterPro" id="IPR033121">
    <property type="entry name" value="PEPTIDASE_A1"/>
</dbReference>
<dbReference type="InterPro" id="IPR021109">
    <property type="entry name" value="Peptidase_aspartic_dom_sf"/>
</dbReference>
<dbReference type="InterPro" id="IPR033876">
    <property type="entry name" value="SAP-like"/>
</dbReference>
<dbReference type="PANTHER" id="PTHR47966:SF65">
    <property type="entry name" value="ASPARTIC-TYPE ENDOPEPTIDASE"/>
    <property type="match status" value="1"/>
</dbReference>
<dbReference type="PANTHER" id="PTHR47966">
    <property type="entry name" value="BETA-SITE APP-CLEAVING ENZYME, ISOFORM A-RELATED"/>
    <property type="match status" value="1"/>
</dbReference>
<dbReference type="Pfam" id="PF00026">
    <property type="entry name" value="Asp"/>
    <property type="match status" value="1"/>
</dbReference>
<dbReference type="PRINTS" id="PR00792">
    <property type="entry name" value="PEPSIN"/>
</dbReference>
<dbReference type="SUPFAM" id="SSF50630">
    <property type="entry name" value="Acid proteases"/>
    <property type="match status" value="1"/>
</dbReference>
<dbReference type="PROSITE" id="PS00141">
    <property type="entry name" value="ASP_PROTEASE"/>
    <property type="match status" value="1"/>
</dbReference>
<dbReference type="PROSITE" id="PS51767">
    <property type="entry name" value="PEPTIDASE_A1"/>
    <property type="match status" value="1"/>
</dbReference>
<gene>
    <name evidence="15" type="primary">SAP8</name>
    <name type="ordered locus">CAALFM_C302510CA</name>
    <name type="ORF">CaO19.242</name>
    <name type="ORF">CaO19.7872</name>
</gene>
<keyword id="KW-0064">Aspartyl protease</keyword>
<keyword id="KW-0165">Cleavage on pair of basic residues</keyword>
<keyword id="KW-1015">Disulfide bond</keyword>
<keyword id="KW-0378">Hydrolase</keyword>
<keyword id="KW-0645">Protease</keyword>
<keyword id="KW-1185">Reference proteome</keyword>
<keyword id="KW-0964">Secreted</keyword>
<keyword id="KW-0732">Signal</keyword>
<keyword id="KW-0843">Virulence</keyword>
<keyword id="KW-0865">Zymogen</keyword>
<accession>Q5AEM6</accession>
<accession>A0A1D8PJG6</accession>
<feature type="signal peptide" evidence="5">
    <location>
        <begin position="1"/>
        <end position="23"/>
    </location>
</feature>
<feature type="propeptide" id="PRO_0000424302" description="Activation peptide" evidence="1">
    <location>
        <begin position="24"/>
        <end position="75"/>
    </location>
</feature>
<feature type="chain" id="PRO_0000424303" description="Secreted aspartic protease 8">
    <location>
        <begin position="76"/>
        <end position="405"/>
    </location>
</feature>
<feature type="domain" description="Peptidase A1" evidence="6">
    <location>
        <begin position="89"/>
        <end position="392"/>
    </location>
</feature>
<feature type="region of interest" description="Disordered" evidence="8">
    <location>
        <begin position="52"/>
        <end position="78"/>
    </location>
</feature>
<feature type="compositionally biased region" description="Low complexity" evidence="8">
    <location>
        <begin position="58"/>
        <end position="70"/>
    </location>
</feature>
<feature type="active site" evidence="7">
    <location>
        <position position="107"/>
    </location>
</feature>
<feature type="active site" evidence="7">
    <location>
        <position position="292"/>
    </location>
</feature>
<feature type="binding site" evidence="4">
    <location>
        <begin position="107"/>
        <end position="109"/>
    </location>
    <ligand>
        <name>pepstatin A</name>
        <dbReference type="ChEBI" id="CHEBI:190525"/>
        <note>inhibitor</note>
    </ligand>
</feature>
<feature type="binding site" evidence="4">
    <location>
        <begin position="160"/>
        <end position="161"/>
    </location>
    <ligand>
        <name>pepstatin A</name>
        <dbReference type="ChEBI" id="CHEBI:190525"/>
        <note>inhibitor</note>
    </ligand>
</feature>
<feature type="binding site" evidence="4">
    <location>
        <begin position="292"/>
        <end position="296"/>
    </location>
    <ligand>
        <name>pepstatin A</name>
        <dbReference type="ChEBI" id="CHEBI:190525"/>
        <note>inhibitor</note>
    </ligand>
</feature>
<feature type="disulfide bond" evidence="3">
    <location>
        <begin position="122"/>
        <end position="134"/>
    </location>
</feature>
<feature type="disulfide bond" evidence="3">
    <location>
        <begin position="327"/>
        <end position="358"/>
    </location>
</feature>
<protein>
    <recommendedName>
        <fullName evidence="15">Secreted aspartic protease 8</fullName>
        <shortName evidence="16">ACP 8</shortName>
        <shortName evidence="16">Aspartate protease 8</shortName>
        <ecNumber evidence="9 13">3.4.23.24</ecNumber>
    </recommendedName>
    <alternativeName>
        <fullName evidence="16">Candidapepsin-8</fullName>
    </alternativeName>
</protein>
<name>CARP8_CANAL</name>
<organism>
    <name type="scientific">Candida albicans (strain SC5314 / ATCC MYA-2876)</name>
    <name type="common">Yeast</name>
    <dbReference type="NCBI Taxonomy" id="237561"/>
    <lineage>
        <taxon>Eukaryota</taxon>
        <taxon>Fungi</taxon>
        <taxon>Dikarya</taxon>
        <taxon>Ascomycota</taxon>
        <taxon>Saccharomycotina</taxon>
        <taxon>Pichiomycetes</taxon>
        <taxon>Debaryomycetaceae</taxon>
        <taxon>Candida/Lodderomyces clade</taxon>
        <taxon>Candida</taxon>
    </lineage>
</organism>